<accession>P59439</accession>
<evidence type="ECO:0000250" key="1"/>
<evidence type="ECO:0000255" key="2">
    <source>
        <dbReference type="PROSITE-ProRule" id="PRU00977"/>
    </source>
</evidence>
<reference key="1">
    <citation type="journal article" date="2002" name="Proc. Natl. Acad. Sci. U.S.A.">
        <title>Extensive mosaic structure revealed by the complete genome sequence of uropathogenic Escherichia coli.</title>
        <authorList>
            <person name="Welch R.A."/>
            <person name="Burland V."/>
            <person name="Plunkett G. III"/>
            <person name="Redford P."/>
            <person name="Roesch P."/>
            <person name="Rasko D."/>
            <person name="Buckles E.L."/>
            <person name="Liou S.-R."/>
            <person name="Boutin A."/>
            <person name="Hackett J."/>
            <person name="Stroud D."/>
            <person name="Mayhew G.F."/>
            <person name="Rose D.J."/>
            <person name="Zhou S."/>
            <person name="Schwartz D.C."/>
            <person name="Perna N.T."/>
            <person name="Mobley H.L.T."/>
            <person name="Donnenberg M.S."/>
            <person name="Blattner F.R."/>
        </authorList>
    </citation>
    <scope>NUCLEOTIDE SEQUENCE [LARGE SCALE GENOMIC DNA]</scope>
    <source>
        <strain>CFT073 / ATCC 700928 / UPEC</strain>
    </source>
</reference>
<name>CHO_ECOL6</name>
<protein>
    <recommendedName>
        <fullName>Excinuclease cho</fullName>
        <ecNumber>3.1.25.-</ecNumber>
    </recommendedName>
    <alternativeName>
        <fullName>Endonuclease cho</fullName>
    </alternativeName>
    <alternativeName>
        <fullName>UvrC homolog protein</fullName>
    </alternativeName>
</protein>
<feature type="chain" id="PRO_0000138371" description="Excinuclease cho">
    <location>
        <begin position="1"/>
        <end position="295"/>
    </location>
</feature>
<feature type="domain" description="GIY-YIG" evidence="2">
    <location>
        <begin position="33"/>
        <end position="108"/>
    </location>
</feature>
<keyword id="KW-0227">DNA damage</keyword>
<keyword id="KW-0228">DNA excision</keyword>
<keyword id="KW-0234">DNA repair</keyword>
<keyword id="KW-0267">Excision nuclease</keyword>
<keyword id="KW-0378">Hydrolase</keyword>
<keyword id="KW-1185">Reference proteome</keyword>
<keyword id="KW-0742">SOS response</keyword>
<comment type="function">
    <text evidence="1">Incises the DNA at the 3' side of a lesion during nucleotide excision repair. Incises the DNA farther away from the lesion than UvrC. Not able to incise the 5' site of a lesion. When a lesion remains because UvrC is not able to induce the 3' incision, Cho incises the DNA. Then UvrC makes the 5' incision. The combined action of Cho and UvrC broadens the substrate range of nucleotide excision repair (By similarity).</text>
</comment>
<gene>
    <name type="primary">cho</name>
    <name type="ordered locus">c2140</name>
</gene>
<sequence>MVRRLTSPRLEFEAAAIYEYPEHLRSFLNDLPTRPGVYLFHGESDTMPLYIGKSINIRSRVLSHLRTPDEAAMLRQSRRISWICTAGEIGALLLEARLIKEQQPLFNKRLRRNRQLCALQLNEKRVDVVYAKEVDFSRAPNLFGLFANRRAALQALQTIADEQKLCYGLLGLEPLSRGRACFRSALKRCAGACCGKESHDDHALRLRQSLERLRVVCWPWKGAVALKEQHPEMTQYHIIQNWLWLGAVNSLKEATTLIRAPAGFDHDGYKILCKPLLSGNYEITELDPVNDQQAS</sequence>
<dbReference type="EC" id="3.1.25.-"/>
<dbReference type="EMBL" id="AE014075">
    <property type="protein sequence ID" value="AAN80599.1"/>
    <property type="molecule type" value="Genomic_DNA"/>
</dbReference>
<dbReference type="RefSeq" id="WP_000252363.1">
    <property type="nucleotide sequence ID" value="NZ_CP051263.1"/>
</dbReference>
<dbReference type="SMR" id="P59439"/>
<dbReference type="STRING" id="199310.c2140"/>
<dbReference type="KEGG" id="ecc:c2140"/>
<dbReference type="eggNOG" id="COG0322">
    <property type="taxonomic scope" value="Bacteria"/>
</dbReference>
<dbReference type="HOGENOM" id="CLU_054721_1_0_6"/>
<dbReference type="BioCyc" id="ECOL199310:C2140-MONOMER"/>
<dbReference type="Proteomes" id="UP000001410">
    <property type="component" value="Chromosome"/>
</dbReference>
<dbReference type="GO" id="GO:0009380">
    <property type="term" value="C:excinuclease repair complex"/>
    <property type="evidence" value="ECO:0007669"/>
    <property type="project" value="TreeGrafter"/>
</dbReference>
<dbReference type="GO" id="GO:0004518">
    <property type="term" value="F:nuclease activity"/>
    <property type="evidence" value="ECO:0007669"/>
    <property type="project" value="UniProtKB-KW"/>
</dbReference>
<dbReference type="GO" id="GO:0006289">
    <property type="term" value="P:nucleotide-excision repair"/>
    <property type="evidence" value="ECO:0007669"/>
    <property type="project" value="InterPro"/>
</dbReference>
<dbReference type="GO" id="GO:0009432">
    <property type="term" value="P:SOS response"/>
    <property type="evidence" value="ECO:0007669"/>
    <property type="project" value="UniProtKB-KW"/>
</dbReference>
<dbReference type="CDD" id="cd10434">
    <property type="entry name" value="GIY-YIG_UvrC_Cho"/>
    <property type="match status" value="1"/>
</dbReference>
<dbReference type="FunFam" id="3.40.1440.10:FF:000004">
    <property type="entry name" value="UV-repair endonuclease Cho"/>
    <property type="match status" value="1"/>
</dbReference>
<dbReference type="Gene3D" id="3.40.1440.10">
    <property type="entry name" value="GIY-YIG endonuclease"/>
    <property type="match status" value="1"/>
</dbReference>
<dbReference type="InterPro" id="IPR000305">
    <property type="entry name" value="GIY-YIG_endonuc"/>
</dbReference>
<dbReference type="InterPro" id="IPR035901">
    <property type="entry name" value="GIY-YIG_endonuc_sf"/>
</dbReference>
<dbReference type="InterPro" id="IPR047296">
    <property type="entry name" value="GIY-YIG_UvrC_Cho"/>
</dbReference>
<dbReference type="InterPro" id="IPR050066">
    <property type="entry name" value="UvrABC_protein_C"/>
</dbReference>
<dbReference type="NCBIfam" id="NF007833">
    <property type="entry name" value="PRK10545.1"/>
    <property type="match status" value="1"/>
</dbReference>
<dbReference type="PANTHER" id="PTHR30562:SF10">
    <property type="entry name" value="EXCINUCLEASE CHO"/>
    <property type="match status" value="1"/>
</dbReference>
<dbReference type="PANTHER" id="PTHR30562">
    <property type="entry name" value="UVRC/OXIDOREDUCTASE"/>
    <property type="match status" value="1"/>
</dbReference>
<dbReference type="SMART" id="SM00465">
    <property type="entry name" value="GIYc"/>
    <property type="match status" value="1"/>
</dbReference>
<dbReference type="SUPFAM" id="SSF82771">
    <property type="entry name" value="GIY-YIG endonuclease"/>
    <property type="match status" value="1"/>
</dbReference>
<dbReference type="PROSITE" id="PS50164">
    <property type="entry name" value="GIY_YIG"/>
    <property type="match status" value="1"/>
</dbReference>
<organism>
    <name type="scientific">Escherichia coli O6:H1 (strain CFT073 / ATCC 700928 / UPEC)</name>
    <dbReference type="NCBI Taxonomy" id="199310"/>
    <lineage>
        <taxon>Bacteria</taxon>
        <taxon>Pseudomonadati</taxon>
        <taxon>Pseudomonadota</taxon>
        <taxon>Gammaproteobacteria</taxon>
        <taxon>Enterobacterales</taxon>
        <taxon>Enterobacteriaceae</taxon>
        <taxon>Escherichia</taxon>
    </lineage>
</organism>
<proteinExistence type="inferred from homology"/>